<comment type="catalytic activity">
    <reaction evidence="1">
        <text>(4aS,6R)-4a-hydroxy-L-erythro-5,6,7,8-tetrahydrobiopterin = (6R)-L-erythro-6,7-dihydrobiopterin + H2O</text>
        <dbReference type="Rhea" id="RHEA:11920"/>
        <dbReference type="ChEBI" id="CHEBI:15377"/>
        <dbReference type="ChEBI" id="CHEBI:15642"/>
        <dbReference type="ChEBI" id="CHEBI:43120"/>
        <dbReference type="EC" id="4.2.1.96"/>
    </reaction>
</comment>
<comment type="similarity">
    <text evidence="1">Belongs to the pterin-4-alpha-carbinolamine dehydratase family.</text>
</comment>
<reference key="1">
    <citation type="journal article" date="2008" name="J. Biotechnol.">
        <title>The genome of Xanthomonas campestris pv. campestris B100 and its use for the reconstruction of metabolic pathways involved in xanthan biosynthesis.</title>
        <authorList>
            <person name="Vorhoelter F.-J."/>
            <person name="Schneiker S."/>
            <person name="Goesmann A."/>
            <person name="Krause L."/>
            <person name="Bekel T."/>
            <person name="Kaiser O."/>
            <person name="Linke B."/>
            <person name="Patschkowski T."/>
            <person name="Rueckert C."/>
            <person name="Schmid J."/>
            <person name="Sidhu V.K."/>
            <person name="Sieber V."/>
            <person name="Tauch A."/>
            <person name="Watt S.A."/>
            <person name="Weisshaar B."/>
            <person name="Becker A."/>
            <person name="Niehaus K."/>
            <person name="Puehler A."/>
        </authorList>
    </citation>
    <scope>NUCLEOTIDE SEQUENCE [LARGE SCALE GENOMIC DNA]</scope>
    <source>
        <strain>B100</strain>
    </source>
</reference>
<accession>B0RTH5</accession>
<proteinExistence type="inferred from homology"/>
<organism>
    <name type="scientific">Xanthomonas campestris pv. campestris (strain B100)</name>
    <dbReference type="NCBI Taxonomy" id="509169"/>
    <lineage>
        <taxon>Bacteria</taxon>
        <taxon>Pseudomonadati</taxon>
        <taxon>Pseudomonadota</taxon>
        <taxon>Gammaproteobacteria</taxon>
        <taxon>Lysobacterales</taxon>
        <taxon>Lysobacteraceae</taxon>
        <taxon>Xanthomonas</taxon>
    </lineage>
</organism>
<protein>
    <recommendedName>
        <fullName evidence="1">Putative pterin-4-alpha-carbinolamine dehydratase</fullName>
        <shortName evidence="1">PHS</shortName>
        <ecNumber evidence="1">4.2.1.96</ecNumber>
    </recommendedName>
    <alternativeName>
        <fullName evidence="1">4-alpha-hydroxy-tetrahydropterin dehydratase</fullName>
    </alternativeName>
    <alternativeName>
        <fullName evidence="1">Pterin carbinolamine dehydratase</fullName>
        <shortName evidence="1">PCD</shortName>
    </alternativeName>
</protein>
<keyword id="KW-0456">Lyase</keyword>
<gene>
    <name type="ordered locus">xcc-b100_2380</name>
</gene>
<name>PHS_XANCB</name>
<evidence type="ECO:0000255" key="1">
    <source>
        <dbReference type="HAMAP-Rule" id="MF_00434"/>
    </source>
</evidence>
<feature type="chain" id="PRO_1000192943" description="Putative pterin-4-alpha-carbinolamine dehydratase">
    <location>
        <begin position="1"/>
        <end position="118"/>
    </location>
</feature>
<sequence length="118" mass="13216">MTDLIPLEQAHCLPRKGSDHKLGEARLAELLPQVPGWELAESGMAITRTFRFADYYRTLAFVNALAWIAHREDHHPDLGVHYDRVVVRYSTHDVGGLSENDFICAAKAAQLFDQGITA</sequence>
<dbReference type="EC" id="4.2.1.96" evidence="1"/>
<dbReference type="EMBL" id="AM920689">
    <property type="protein sequence ID" value="CAP51739.1"/>
    <property type="molecule type" value="Genomic_DNA"/>
</dbReference>
<dbReference type="SMR" id="B0RTH5"/>
<dbReference type="KEGG" id="xca:xcc-b100_2380"/>
<dbReference type="HOGENOM" id="CLU_081974_2_1_6"/>
<dbReference type="Proteomes" id="UP000001188">
    <property type="component" value="Chromosome"/>
</dbReference>
<dbReference type="GO" id="GO:0008124">
    <property type="term" value="F:4-alpha-hydroxytetrahydrobiopterin dehydratase activity"/>
    <property type="evidence" value="ECO:0007669"/>
    <property type="project" value="UniProtKB-UniRule"/>
</dbReference>
<dbReference type="GO" id="GO:0006729">
    <property type="term" value="P:tetrahydrobiopterin biosynthetic process"/>
    <property type="evidence" value="ECO:0007669"/>
    <property type="project" value="InterPro"/>
</dbReference>
<dbReference type="CDD" id="cd00913">
    <property type="entry name" value="PCD_DCoH_subfamily_a"/>
    <property type="match status" value="1"/>
</dbReference>
<dbReference type="Gene3D" id="3.30.1360.20">
    <property type="entry name" value="Transcriptional coactivator/pterin dehydratase"/>
    <property type="match status" value="1"/>
</dbReference>
<dbReference type="HAMAP" id="MF_00434">
    <property type="entry name" value="Pterin_4_alpha"/>
    <property type="match status" value="1"/>
</dbReference>
<dbReference type="InterPro" id="IPR036428">
    <property type="entry name" value="PCD_sf"/>
</dbReference>
<dbReference type="InterPro" id="IPR001533">
    <property type="entry name" value="Pterin_deHydtase"/>
</dbReference>
<dbReference type="NCBIfam" id="NF002019">
    <property type="entry name" value="PRK00823.1-4"/>
    <property type="match status" value="1"/>
</dbReference>
<dbReference type="PANTHER" id="PTHR12599">
    <property type="entry name" value="PTERIN-4-ALPHA-CARBINOLAMINE DEHYDRATASE"/>
    <property type="match status" value="1"/>
</dbReference>
<dbReference type="PANTHER" id="PTHR12599:SF0">
    <property type="entry name" value="PTERIN-4-ALPHA-CARBINOLAMINE DEHYDRATASE"/>
    <property type="match status" value="1"/>
</dbReference>
<dbReference type="Pfam" id="PF01329">
    <property type="entry name" value="Pterin_4a"/>
    <property type="match status" value="1"/>
</dbReference>
<dbReference type="SUPFAM" id="SSF55248">
    <property type="entry name" value="PCD-like"/>
    <property type="match status" value="1"/>
</dbReference>